<accession>Q8CPW0</accession>
<feature type="chain" id="PRO_0000213104" description="D-alanyl carrier protein">
    <location>
        <begin position="1"/>
        <end position="78"/>
    </location>
</feature>
<feature type="domain" description="Carrier" evidence="1">
    <location>
        <begin position="1"/>
        <end position="78"/>
    </location>
</feature>
<feature type="modified residue" description="O-(pantetheine 4'-phosphoryl)serine" evidence="1">
    <location>
        <position position="36"/>
    </location>
</feature>
<protein>
    <recommendedName>
        <fullName evidence="1">D-alanyl carrier protein</fullName>
        <shortName evidence="1">DCP</shortName>
    </recommendedName>
    <alternativeName>
        <fullName evidence="1">D-alanine--poly(phosphoribitol) ligase subunit 2</fullName>
    </alternativeName>
</protein>
<keyword id="KW-0961">Cell wall biogenesis/degradation</keyword>
<keyword id="KW-0963">Cytoplasm</keyword>
<keyword id="KW-0596">Phosphopantetheine</keyword>
<keyword id="KW-0597">Phosphoprotein</keyword>
<dbReference type="EMBL" id="AE015929">
    <property type="protein sequence ID" value="AAO04223.1"/>
    <property type="molecule type" value="Genomic_DNA"/>
</dbReference>
<dbReference type="RefSeq" id="NP_764181.1">
    <property type="nucleotide sequence ID" value="NC_004461.1"/>
</dbReference>
<dbReference type="RefSeq" id="WP_001831996.1">
    <property type="nucleotide sequence ID" value="NZ_WBME01000029.1"/>
</dbReference>
<dbReference type="SMR" id="Q8CPW0"/>
<dbReference type="GeneID" id="50019226"/>
<dbReference type="KEGG" id="sep:SE_0626"/>
<dbReference type="PATRIC" id="fig|176280.10.peg.598"/>
<dbReference type="eggNOG" id="COG0236">
    <property type="taxonomic scope" value="Bacteria"/>
</dbReference>
<dbReference type="HOGENOM" id="CLU_108696_19_0_9"/>
<dbReference type="OrthoDB" id="6462171at2"/>
<dbReference type="UniPathway" id="UPA00556"/>
<dbReference type="Proteomes" id="UP000001411">
    <property type="component" value="Chromosome"/>
</dbReference>
<dbReference type="GO" id="GO:0005737">
    <property type="term" value="C:cytoplasm"/>
    <property type="evidence" value="ECO:0007669"/>
    <property type="project" value="UniProtKB-SubCell"/>
</dbReference>
<dbReference type="GO" id="GO:0036370">
    <property type="term" value="F:D-alanyl carrier activity"/>
    <property type="evidence" value="ECO:0007669"/>
    <property type="project" value="UniProtKB-UniRule"/>
</dbReference>
<dbReference type="GO" id="GO:0071555">
    <property type="term" value="P:cell wall organization"/>
    <property type="evidence" value="ECO:0007669"/>
    <property type="project" value="UniProtKB-KW"/>
</dbReference>
<dbReference type="GO" id="GO:0070395">
    <property type="term" value="P:lipoteichoic acid biosynthetic process"/>
    <property type="evidence" value="ECO:0007669"/>
    <property type="project" value="UniProtKB-UniRule"/>
</dbReference>
<dbReference type="Gene3D" id="1.10.1200.10">
    <property type="entry name" value="ACP-like"/>
    <property type="match status" value="1"/>
</dbReference>
<dbReference type="HAMAP" id="MF_00565">
    <property type="entry name" value="DltC"/>
    <property type="match status" value="1"/>
</dbReference>
<dbReference type="InterPro" id="IPR036736">
    <property type="entry name" value="ACP-like_sf"/>
</dbReference>
<dbReference type="InterPro" id="IPR003230">
    <property type="entry name" value="DltC"/>
</dbReference>
<dbReference type="InterPro" id="IPR009081">
    <property type="entry name" value="PP-bd_ACP"/>
</dbReference>
<dbReference type="NCBIfam" id="TIGR01688">
    <property type="entry name" value="dltC"/>
    <property type="match status" value="1"/>
</dbReference>
<dbReference type="NCBIfam" id="NF003464">
    <property type="entry name" value="PRK05087.1"/>
    <property type="match status" value="1"/>
</dbReference>
<dbReference type="Pfam" id="PF00550">
    <property type="entry name" value="PP-binding"/>
    <property type="match status" value="1"/>
</dbReference>
<dbReference type="SUPFAM" id="SSF47336">
    <property type="entry name" value="ACP-like"/>
    <property type="match status" value="1"/>
</dbReference>
<dbReference type="PROSITE" id="PS50075">
    <property type="entry name" value="CARRIER"/>
    <property type="match status" value="1"/>
</dbReference>
<name>DLTC_STAES</name>
<reference key="1">
    <citation type="journal article" date="2003" name="Mol. Microbiol.">
        <title>Genome-based analysis of virulence genes in a non-biofilm-forming Staphylococcus epidermidis strain (ATCC 12228).</title>
        <authorList>
            <person name="Zhang Y.-Q."/>
            <person name="Ren S.-X."/>
            <person name="Li H.-L."/>
            <person name="Wang Y.-X."/>
            <person name="Fu G."/>
            <person name="Yang J."/>
            <person name="Qin Z.-Q."/>
            <person name="Miao Y.-G."/>
            <person name="Wang W.-Y."/>
            <person name="Chen R.-S."/>
            <person name="Shen Y."/>
            <person name="Chen Z."/>
            <person name="Yuan Z.-H."/>
            <person name="Zhao G.-P."/>
            <person name="Qu D."/>
            <person name="Danchin A."/>
            <person name="Wen Y.-M."/>
        </authorList>
    </citation>
    <scope>NUCLEOTIDE SEQUENCE [LARGE SCALE GENOMIC DNA]</scope>
    <source>
        <strain>ATCC 12228 / FDA PCI 1200</strain>
    </source>
</reference>
<comment type="function">
    <text evidence="1">Carrier protein involved in the D-alanylation of lipoteichoic acid (LTA). The loading of thioester-linked D-alanine onto DltC is catalyzed by D-alanine--D-alanyl carrier protein ligase DltA. The DltC-carried D-alanyl group is further transferred to cell membrane phosphatidylglycerol (PG) by forming an ester bond, probably catalyzed by DltD. D-alanylation of LTA plays an important role in modulating the properties of the cell wall in Gram-positive bacteria, influencing the net charge of the cell wall.</text>
</comment>
<comment type="pathway">
    <text evidence="1">Cell wall biogenesis; lipoteichoic acid biosynthesis.</text>
</comment>
<comment type="subcellular location">
    <subcellularLocation>
        <location evidence="1">Cytoplasm</location>
    </subcellularLocation>
</comment>
<comment type="PTM">
    <text evidence="1">4'-phosphopantetheine is transferred from CoA to a specific serine of apo-DCP.</text>
</comment>
<comment type="similarity">
    <text evidence="1">Belongs to the DltC family.</text>
</comment>
<organism>
    <name type="scientific">Staphylococcus epidermidis (strain ATCC 12228 / FDA PCI 1200)</name>
    <dbReference type="NCBI Taxonomy" id="176280"/>
    <lineage>
        <taxon>Bacteria</taxon>
        <taxon>Bacillati</taxon>
        <taxon>Bacillota</taxon>
        <taxon>Bacilli</taxon>
        <taxon>Bacillales</taxon>
        <taxon>Staphylococcaceae</taxon>
        <taxon>Staphylococcus</taxon>
    </lineage>
</organism>
<sequence length="78" mass="9063">MEFREQVLDLLAEVAENNIVKENPDVEIFEEGIIDSFQTVGLLLEIQNKLDIEVSIMDFDRDEWATPNKIVEALEELR</sequence>
<gene>
    <name evidence="1" type="primary">dltC</name>
    <name type="ordered locus">SE_0626</name>
</gene>
<proteinExistence type="inferred from homology"/>
<evidence type="ECO:0000255" key="1">
    <source>
        <dbReference type="HAMAP-Rule" id="MF_00565"/>
    </source>
</evidence>